<organism>
    <name type="scientific">Xenopus laevis</name>
    <name type="common">African clawed frog</name>
    <dbReference type="NCBI Taxonomy" id="8355"/>
    <lineage>
        <taxon>Eukaryota</taxon>
        <taxon>Metazoa</taxon>
        <taxon>Chordata</taxon>
        <taxon>Craniata</taxon>
        <taxon>Vertebrata</taxon>
        <taxon>Euteleostomi</taxon>
        <taxon>Amphibia</taxon>
        <taxon>Batrachia</taxon>
        <taxon>Anura</taxon>
        <taxon>Pipoidea</taxon>
        <taxon>Pipidae</taxon>
        <taxon>Xenopodinae</taxon>
        <taxon>Xenopus</taxon>
        <taxon>Xenopus</taxon>
    </lineage>
</organism>
<feature type="signal peptide" evidence="4">
    <location>
        <begin position="1"/>
        <end position="21"/>
    </location>
</feature>
<feature type="chain" id="PRO_0000445549" description="Latency-associated peptide" evidence="1">
    <location>
        <begin position="22"/>
        <end position="270"/>
    </location>
</feature>
<feature type="chain" id="PRO_0000033777" description="Transforming growth factor beta-1" evidence="1">
    <location>
        <begin position="271"/>
        <end position="382"/>
    </location>
</feature>
<feature type="region of interest" description="Straightjacket domain" evidence="3">
    <location>
        <begin position="22"/>
        <end position="65"/>
    </location>
</feature>
<feature type="region of interest" description="Arm domain" evidence="3">
    <location>
        <begin position="66"/>
        <end position="263"/>
    </location>
</feature>
<feature type="region of interest" description="Bowtie tail" evidence="1">
    <location>
        <begin position="218"/>
        <end position="242"/>
    </location>
</feature>
<feature type="short sequence motif" description="Cell attachment site" evidence="4">
    <location>
        <begin position="234"/>
        <end position="236"/>
    </location>
</feature>
<feature type="glycosylation site" description="N-linked (GlcNAc...) asparagine" evidence="4">
    <location>
        <position position="73"/>
    </location>
</feature>
<feature type="glycosylation site" description="N-linked (GlcNAc...) asparagine" evidence="4">
    <location>
        <position position="123"/>
    </location>
</feature>
<feature type="glycosylation site" description="N-linked (GlcNAc...) asparagine" evidence="4">
    <location>
        <position position="166"/>
    </location>
</feature>
<feature type="disulfide bond" description="Interchain (with C-? in LTBP1 TB3 domain); in inactive form" evidence="3">
    <location>
        <position position="25"/>
    </location>
</feature>
<feature type="disulfide bond" description="Interchain (with C-217)" evidence="1">
    <location>
        <position position="215"/>
    </location>
</feature>
<feature type="disulfide bond" description="Interchain (with C-215)" evidence="1">
    <location>
        <position position="217"/>
    </location>
</feature>
<feature type="disulfide bond" evidence="1">
    <location>
        <begin position="277"/>
        <end position="286"/>
    </location>
</feature>
<feature type="disulfide bond" evidence="1">
    <location>
        <begin position="285"/>
        <end position="348"/>
    </location>
</feature>
<feature type="disulfide bond" evidence="1">
    <location>
        <begin position="314"/>
        <end position="379"/>
    </location>
</feature>
<feature type="disulfide bond" evidence="1">
    <location>
        <begin position="318"/>
        <end position="381"/>
    </location>
</feature>
<feature type="disulfide bond" description="Interchain" evidence="1">
    <location>
        <position position="347"/>
    </location>
</feature>
<gene>
    <name type="primary">tgfb1</name>
</gene>
<protein>
    <recommendedName>
        <fullName>Transforming growth factor beta-1 proprotein</fullName>
    </recommendedName>
    <alternativeName>
        <fullName evidence="5">TGF-beta-5</fullName>
    </alternativeName>
    <component>
        <recommendedName>
            <fullName>Latency-associated peptide</fullName>
            <shortName>LAP</shortName>
        </recommendedName>
    </component>
    <component>
        <recommendedName>
            <fullName>Transforming growth factor beta-1</fullName>
            <shortName>TGF-beta-1</shortName>
        </recommendedName>
    </component>
</protein>
<keyword id="KW-0165">Cleavage on pair of basic residues</keyword>
<keyword id="KW-1015">Disulfide bond</keyword>
<keyword id="KW-0272">Extracellular matrix</keyword>
<keyword id="KW-0325">Glycoprotein</keyword>
<keyword id="KW-0339">Growth factor</keyword>
<keyword id="KW-0497">Mitogen</keyword>
<keyword id="KW-1185">Reference proteome</keyword>
<keyword id="KW-0964">Secreted</keyword>
<keyword id="KW-0732">Signal</keyword>
<dbReference type="EMBL" id="J05180">
    <property type="protein sequence ID" value="AAA49968.1"/>
    <property type="molecule type" value="mRNA"/>
</dbReference>
<dbReference type="EMBL" id="AF009335">
    <property type="protein sequence ID" value="AAB64441.1"/>
    <property type="molecule type" value="Genomic_DNA"/>
</dbReference>
<dbReference type="EMBL" id="AF009331">
    <property type="protein sequence ID" value="AAB64441.1"/>
    <property type="status" value="JOINED"/>
    <property type="molecule type" value="Genomic_DNA"/>
</dbReference>
<dbReference type="EMBL" id="AF009332">
    <property type="protein sequence ID" value="AAB64441.1"/>
    <property type="status" value="JOINED"/>
    <property type="molecule type" value="Genomic_DNA"/>
</dbReference>
<dbReference type="EMBL" id="AF009333">
    <property type="protein sequence ID" value="AAB64441.1"/>
    <property type="status" value="JOINED"/>
    <property type="molecule type" value="Genomic_DNA"/>
</dbReference>
<dbReference type="EMBL" id="AF009334">
    <property type="protein sequence ID" value="AAB64441.1"/>
    <property type="status" value="JOINED"/>
    <property type="molecule type" value="Genomic_DNA"/>
</dbReference>
<dbReference type="EMBL" id="BC129720">
    <property type="protein sequence ID" value="AAI29721.1"/>
    <property type="molecule type" value="mRNA"/>
</dbReference>
<dbReference type="PIR" id="A34929">
    <property type="entry name" value="B61036"/>
</dbReference>
<dbReference type="SMR" id="P16176"/>
<dbReference type="GlyCosmos" id="P16176">
    <property type="glycosylation" value="3 sites, No reported glycans"/>
</dbReference>
<dbReference type="DNASU" id="397778"/>
<dbReference type="GeneID" id="397778"/>
<dbReference type="KEGG" id="xla:397778"/>
<dbReference type="AGR" id="Xenbase:XB-GENE-865765"/>
<dbReference type="CTD" id="397778"/>
<dbReference type="Xenbase" id="XB-GENE-865765">
    <property type="gene designation" value="tgfb1.L"/>
</dbReference>
<dbReference type="OMA" id="YLGFHII"/>
<dbReference type="OrthoDB" id="8863549at2759"/>
<dbReference type="Proteomes" id="UP000186698">
    <property type="component" value="Chromosome 8L"/>
</dbReference>
<dbReference type="Bgee" id="397778">
    <property type="expression patterns" value="Expressed in spleen and 14 other cell types or tissues"/>
</dbReference>
<dbReference type="GO" id="GO:0005615">
    <property type="term" value="C:extracellular space"/>
    <property type="evidence" value="ECO:0000318"/>
    <property type="project" value="GO_Central"/>
</dbReference>
<dbReference type="GO" id="GO:0005125">
    <property type="term" value="F:cytokine activity"/>
    <property type="evidence" value="ECO:0000318"/>
    <property type="project" value="GO_Central"/>
</dbReference>
<dbReference type="GO" id="GO:0008083">
    <property type="term" value="F:growth factor activity"/>
    <property type="evidence" value="ECO:0007669"/>
    <property type="project" value="UniProtKB-KW"/>
</dbReference>
<dbReference type="GO" id="GO:0005160">
    <property type="term" value="F:transforming growth factor beta receptor binding"/>
    <property type="evidence" value="ECO:0007669"/>
    <property type="project" value="InterPro"/>
</dbReference>
<dbReference type="GO" id="GO:0051781">
    <property type="term" value="P:positive regulation of cell division"/>
    <property type="evidence" value="ECO:0007669"/>
    <property type="project" value="UniProtKB-KW"/>
</dbReference>
<dbReference type="GO" id="GO:0014008">
    <property type="term" value="P:positive regulation of microglia differentiation"/>
    <property type="evidence" value="ECO:0000250"/>
    <property type="project" value="UniProtKB"/>
</dbReference>
<dbReference type="GO" id="GO:0042127">
    <property type="term" value="P:regulation of cell population proliferation"/>
    <property type="evidence" value="ECO:0000318"/>
    <property type="project" value="GO_Central"/>
</dbReference>
<dbReference type="GO" id="GO:0007179">
    <property type="term" value="P:transforming growth factor beta receptor signaling pathway"/>
    <property type="evidence" value="ECO:0000318"/>
    <property type="project" value="GO_Central"/>
</dbReference>
<dbReference type="CDD" id="cd19384">
    <property type="entry name" value="TGF_beta_TGFB1"/>
    <property type="match status" value="1"/>
</dbReference>
<dbReference type="FunFam" id="2.10.90.10:FF:000004">
    <property type="entry name" value="Transforming growth factor beta"/>
    <property type="match status" value="1"/>
</dbReference>
<dbReference type="FunFam" id="2.60.120.970:FF:000047">
    <property type="entry name" value="Transforming growth factor beta"/>
    <property type="match status" value="1"/>
</dbReference>
<dbReference type="Gene3D" id="2.60.120.970">
    <property type="match status" value="1"/>
</dbReference>
<dbReference type="Gene3D" id="2.10.90.10">
    <property type="entry name" value="Cystine-knot cytokines"/>
    <property type="match status" value="1"/>
</dbReference>
<dbReference type="InterPro" id="IPR029034">
    <property type="entry name" value="Cystine-knot_cytokine"/>
</dbReference>
<dbReference type="InterPro" id="IPR001839">
    <property type="entry name" value="TGF-b_C"/>
</dbReference>
<dbReference type="InterPro" id="IPR001111">
    <property type="entry name" value="TGF-b_propeptide"/>
</dbReference>
<dbReference type="InterPro" id="IPR016319">
    <property type="entry name" value="TGF-beta"/>
</dbReference>
<dbReference type="InterPro" id="IPR015615">
    <property type="entry name" value="TGF-beta-rel"/>
</dbReference>
<dbReference type="InterPro" id="IPR003939">
    <property type="entry name" value="TGFb1"/>
</dbReference>
<dbReference type="InterPro" id="IPR017948">
    <property type="entry name" value="TGFb_CS"/>
</dbReference>
<dbReference type="PANTHER" id="PTHR11848">
    <property type="entry name" value="TGF-BETA FAMILY"/>
    <property type="match status" value="1"/>
</dbReference>
<dbReference type="PANTHER" id="PTHR11848:SF125">
    <property type="entry name" value="TRANSFORMING GROWTH FACTOR BETA-1 PROPROTEIN"/>
    <property type="match status" value="1"/>
</dbReference>
<dbReference type="Pfam" id="PF00019">
    <property type="entry name" value="TGF_beta"/>
    <property type="match status" value="1"/>
</dbReference>
<dbReference type="Pfam" id="PF00688">
    <property type="entry name" value="TGFb_propeptide"/>
    <property type="match status" value="1"/>
</dbReference>
<dbReference type="PIRSF" id="PIRSF001787">
    <property type="entry name" value="TGF-beta"/>
    <property type="match status" value="1"/>
</dbReference>
<dbReference type="PRINTS" id="PR01423">
    <property type="entry name" value="TGFBETA"/>
</dbReference>
<dbReference type="PRINTS" id="PR01424">
    <property type="entry name" value="TGFBETA1"/>
</dbReference>
<dbReference type="SMART" id="SM00204">
    <property type="entry name" value="TGFB"/>
    <property type="match status" value="1"/>
</dbReference>
<dbReference type="SUPFAM" id="SSF57501">
    <property type="entry name" value="Cystine-knot cytokines"/>
    <property type="match status" value="1"/>
</dbReference>
<dbReference type="PROSITE" id="PS00250">
    <property type="entry name" value="TGF_BETA_1"/>
    <property type="match status" value="1"/>
</dbReference>
<dbReference type="PROSITE" id="PS51362">
    <property type="entry name" value="TGF_BETA_2"/>
    <property type="match status" value="1"/>
</dbReference>
<proteinExistence type="evidence at transcript level"/>
<sequence>MEVLWMLLVLLVLHLSSLAMSLSTCKAVDMEEVRKRRIEAIRGQILSKLKLDKTPDVDSEKMTVPSEAIFLYNSTLEVIREKATREEEHVGHDQNIQDYYAKQVYRFESITELEDHEFKFKFNASHVRENVGMNSLLHHAELRMYKKQTDKNMDQRMELFWKYQENGTTHSRYLESKYITPVTDDEWMSFDVTKTVNEWLKRAEENEQFGLQPACKCPTPQAKDIDIEGFPALRGDLASLSSKENTKPYLMITSMPAERIDTVTSSRKKRGVGQEYCFGNNGPNCCVKPLYINFRKDLGWKWIHEPKGYEANYCLGNCPYIWSMDTQYSKVLSLYNQNNPGASISPCCVPDVLEPLPIIYYVGRTAKVEQLSNMVVRSCNCS</sequence>
<evidence type="ECO:0000250" key="1">
    <source>
        <dbReference type="UniProtKB" id="P01137"/>
    </source>
</evidence>
<evidence type="ECO:0000250" key="2">
    <source>
        <dbReference type="UniProtKB" id="P04202"/>
    </source>
</evidence>
<evidence type="ECO:0000250" key="3">
    <source>
        <dbReference type="UniProtKB" id="P07200"/>
    </source>
</evidence>
<evidence type="ECO:0000255" key="4"/>
<evidence type="ECO:0000303" key="5">
    <source>
    </source>
</evidence>
<evidence type="ECO:0000305" key="6"/>
<comment type="function">
    <text evidence="1">Transforming growth factor beta-1 proprotein: Precursor of the Latency-associated peptide (LAP) and Transforming growth factor beta-1 (TGF-beta-1) chains, which constitute the regulatory and active subunit of TGF-beta-1, respectively.</text>
</comment>
<comment type="function">
    <molecule>Latency-associated peptide</molecule>
    <text evidence="1">Required to maintain the Transforming growth factor beta-1 (TGF-beta-1) chain in a latent state during storage in extracellular matrix. Associates non-covalently with TGF-beta-1 and regulates its activation via interaction with 'milieu molecules', such as LTBP1, LRRC32/GARP and LRRC33/NRROS, that control activation of TGF-beta-1. Interaction with integrins (ITGAV:ITGB6 or ITGAV:ITGB8) results in distortion of the Latency-associated peptide chain and subsequent release of the active TGF-beta-1.</text>
</comment>
<comment type="function">
    <text evidence="1 2">Transforming growth factor beta-1: Multifunctional protein that regulates the growth and differentiation of various cell types and is involved in various processes, such as normal development, immune function, microglia function and responses to neurodegeneration (By similarity). Activation into mature form follows different steps: following cleavage of the proprotein in the Golgi apparatus, Latency-associated peptide (LAP) and Transforming growth factor beta-1 (TGF-beta-1) chains remain non-covalently linked rendering TGF-beta-1 inactive during storage in extracellular matrix. At the same time, LAP chain interacts with 'milieu molecules', such as ltbp1, lrrc32/garp and lrrc33/nrros that control activation of TGF-beta-1 and maintain it in a latent state during storage in extracellular milieus. TGF-beta-1 is released from LAP by integrins (ITGAV:ITGB6 or ITGAV:ITGB8): integrin-binding to LAP stabilizes an alternative conformation of the LAP bowtie tail and results in distortion of the LAP chain and subsequent release of the active TGF-beta-1. Once activated following release of LAP, TGF-beta-1 acts by binding to TGF-beta receptors (tgfbr1 and tgfbr2), which transduce signal (By similarity). While expressed by many cells types, TGF-beta-1 only has a very localized range of action within cell environment thanks to fine regulation of its activation by Latency-associated peptide chain (LAP) and 'milieu molecules'. Plays an important role in bone remodeling: acts as a potent stimulator of osteoblastic bone formation. Can promote either T-helper 17 cells (Th17) or regulatory T-cells (Treg) lineage differentiation in a concentration-dependent manner (By similarity). Can induce epithelial-to-mesenchymal transition (EMT) and cell migration in various cell types (By similarity).</text>
</comment>
<comment type="subunit">
    <text evidence="1">Latency-associated peptide: Homodimer; disulfide-linked. Latency-associated peptide: Interacts with Transforming growth factor beta-1 (TGF-beta-1) chain; interaction is non-covalent and maintains (TGF-beta-1) in a latent state; each Latency-associated peptide (LAP) monomer interacts with TGF-beta-1 in the other monomer. Transforming growth factor beta-1: Homodimer; disulfide-linked. Transforming growth factor beta-1: Interacts with TGF-beta receptors (tgfbr1 and tgfbr2), leading to signal transduction.</text>
</comment>
<comment type="subcellular location">
    <molecule>Latency-associated peptide</molecule>
    <subcellularLocation>
        <location evidence="1">Secreted</location>
        <location evidence="1">Extracellular space</location>
        <location evidence="1">Extracellular matrix</location>
    </subcellularLocation>
</comment>
<comment type="subcellular location">
    <molecule>Transforming growth factor beta-1</molecule>
    <subcellularLocation>
        <location evidence="1">Secreted</location>
    </subcellularLocation>
</comment>
<comment type="domain">
    <molecule>Latency-associated peptide</molecule>
    <text evidence="3">The 'straitjacket' and 'arm' domains encircle the Transforming growth factor beta-1 (TGF-beta-1) monomers and are fastened together by strong bonding between Lys-53 and Tyr-99/Tyr-100.</text>
</comment>
<comment type="domain">
    <molecule>Latency-associated peptide</molecule>
    <text evidence="1">The cell attachment site motif mediates binding to integrins (ITGAV:ITGB6 or ITGAV:ITGB8). The motif locates to a long loop in the arm domain called the bowtie tail. Integrin-binding stabilizes an alternative conformation of the bowtie tail. Activation by integrin requires force application by the actin cytoskeleton, which is resisted by the 'milieu molecules' (such as ltbp1, lrrc32/garp and/or lrrc33/nrros), resulting in distortion of the prodomain and release of the active TGF-beta-1.</text>
</comment>
<comment type="PTM">
    <text evidence="1">Transforming growth factor beta-1 proprotein: The precursor proprotein is cleaved in the Golgi apparatus to form Transforming growth factor beta-1 (TGF-beta-1) and Latency-associated peptide (LAP) chains, which remain non-covalently linked, rendering TGF-beta-1 inactive.</text>
</comment>
<comment type="similarity">
    <text evidence="6">Belongs to the TGF-beta family.</text>
</comment>
<reference key="1">
    <citation type="journal article" date="1990" name="J. Biol. Chem.">
        <title>Identification of a novel transforming growth factor-beta (TGF-beta 5) mRNA in Xenopus laevis.</title>
        <authorList>
            <person name="Kondaiah P."/>
            <person name="Sands M.J."/>
            <person name="Smith J.M."/>
            <person name="Fields A."/>
            <person name="Roberts A.B."/>
            <person name="Sporn M.B."/>
            <person name="Melton D.A."/>
        </authorList>
    </citation>
    <scope>NUCLEOTIDE SEQUENCE [MRNA]</scope>
</reference>
<reference key="2">
    <citation type="submission" date="1997-08" db="EMBL/GenBank/DDBJ databases">
        <authorList>
            <person name="Vempati U.D."/>
            <person name="Kondaiah P."/>
        </authorList>
    </citation>
    <scope>NUCLEOTIDE SEQUENCE [GENOMIC DNA]</scope>
</reference>
<reference key="3">
    <citation type="submission" date="2006-12" db="EMBL/GenBank/DDBJ databases">
        <authorList>
            <consortium name="NIH - Xenopus Gene Collection (XGC) project"/>
        </authorList>
    </citation>
    <scope>NUCLEOTIDE SEQUENCE [LARGE SCALE MRNA]</scope>
    <source>
        <tissue>Thymus</tissue>
    </source>
</reference>
<name>TGFB1_XENLA</name>
<accession>P16176</accession>
<accession>A1L2V0</accession>